<reference key="1">
    <citation type="journal article" date="1999" name="J. Biol. Chem.">
        <title>Isolation, characterization, and functional analysis of a novel cDNA clone encoding a small rubber particle protein from Hevea brasiliensis.</title>
        <authorList>
            <person name="Oh S.K."/>
            <person name="Kang H."/>
            <person name="Shin D.H."/>
            <person name="Yang J."/>
            <person name="Chow K.-S."/>
            <person name="Yeang H.Y."/>
            <person name="Wagner B."/>
            <person name="Breiteneder H."/>
            <person name="Han K.-H."/>
        </authorList>
    </citation>
    <scope>NUCLEOTIDE SEQUENCE [MRNA]</scope>
    <scope>TISSUE SPECIFICITY</scope>
    <scope>FUNCTION</scope>
    <source>
        <strain>cv. RRIM 600</strain>
        <tissue>Latex</tissue>
    </source>
</reference>
<reference key="2">
    <citation type="journal article" date="1999" name="J. Allergy Clin. Immunol.">
        <title>Cloning, expression, and characterization of recombinant Hev b 3, a Hevea brasiliensis protein associated with latex allergy in patients with spina bifida.</title>
        <authorList>
            <person name="Wagner B."/>
            <person name="Krebitz M."/>
            <person name="Buck D."/>
            <person name="Niggemann B."/>
            <person name="Yeang H.Y."/>
            <person name="Han K.-H."/>
            <person name="Scheiner O."/>
            <person name="Breiteneder H."/>
        </authorList>
    </citation>
    <scope>NUCLEOTIDE SEQUENCE [MRNA]</scope>
    <source>
        <strain>cv. RRIM 600</strain>
        <tissue>Latex</tissue>
    </source>
</reference>
<reference key="3">
    <citation type="journal article" date="1995" name="Int. Arch. Allergy Immunol.">
        <title>Purification and partial amino acid sequencing of a 27-kD natural rubber allergen recognized by latex-allergic children with spina bifida.</title>
        <authorList>
            <person name="Alenius H."/>
            <person name="Kalkkinen N."/>
            <person name="Lukka M."/>
            <person name="Turjanmaa K."/>
            <person name="Reunala T."/>
            <person name="Maekinen-Kiljunen S."/>
            <person name="Palosuo T."/>
        </authorList>
    </citation>
    <scope>PROTEIN SEQUENCE OF 12-17; 23-31; 36-50; 54-68; 73-86; 91-104; 106-123; 125-143 AND 175-192</scope>
    <source>
        <tissue>Latex</tissue>
    </source>
</reference>
<reference key="4">
    <citation type="journal article" date="1995" name="J. Immunol.">
        <title>Characterization of a major latex allergen associated with hypersensitivity in spina bifida patients.</title>
        <authorList>
            <person name="Lu L.-J."/>
            <person name="Kurup V.P."/>
            <person name="Hoffman D.R."/>
            <person name="Kelly K.J."/>
            <person name="Murali P.S."/>
            <person name="Fink J.N."/>
        </authorList>
    </citation>
    <scope>PROTEIN SEQUENCE OF 8-33; 36-49; 54-68; 73-90 AND 178-194</scope>
    <source>
        <tissue>Latex</tissue>
    </source>
</reference>
<reference key="5">
    <citation type="journal article" date="1998" name="Allergy">
        <title>Amino acid sequence similarity of Hev b 3 to two previously reported 27- and 23-kDa latex proteins allergenic to spina bifida patients.</title>
        <authorList>
            <person name="Yeang H.Y."/>
            <person name="Ward M.A."/>
            <person name="Zamri A.S.M."/>
            <person name="Dennis M.S."/>
            <person name="Light D.R."/>
        </authorList>
    </citation>
    <scope>PROTEIN SEQUENCE OF 18-35; 54-68; 73-90; 106-122 AND 183-194</scope>
    <scope>MASS SPECTROMETRY</scope>
    <source>
        <strain>cv. Costa Rica</strain>
        <strain>cv. RRIM 600</strain>
        <tissue>Latex</tissue>
    </source>
</reference>
<reference key="6">
    <citation type="journal article" date="1996" name="J. Allergy Clin. Immunol.">
        <title>The 14.6 kd rubber elongation factor (Hev b 1) and 24 kd (Hev b 3) rubber particle proteins are recognized by IgE from patients with spina bifida and latex allergy.</title>
        <authorList>
            <person name="Yeang H.Y."/>
            <person name="Cheong K.F."/>
            <person name="Sunderasan E."/>
            <person name="Hamzah S."/>
            <person name="Chew N.P."/>
            <person name="Hamid S."/>
            <person name="Hamilton R.G."/>
            <person name="Cardosa M.J."/>
        </authorList>
    </citation>
    <scope>ALLERGEN</scope>
</reference>
<reference key="7">
    <citation type="journal article" date="2000" name="Mol. Immunol.">
        <title>Unique and shared IgE epitopes of Hev b 1 and Hev b 3 in latex allergy.</title>
        <authorList>
            <person name="Banerjee B."/>
            <person name="Kanitpong K."/>
            <person name="Fink J.N."/>
            <person name="Zussman M."/>
            <person name="Sussman G.L."/>
            <person name="Kelly K.J."/>
            <person name="Kurup V.P."/>
        </authorList>
    </citation>
    <scope>EPITOPE MAPPING</scope>
</reference>
<reference key="8">
    <citation type="journal article" date="2002" name="Plant Cell Physiol.">
        <title>Characterization of polypeptides accumulated in the latex cytosol of rubber trees affected by the tapping panel dryness syndrome.</title>
        <authorList>
            <person name="Sookmark U."/>
            <person name="Pujade-Renaud V."/>
            <person name="Chrestin H."/>
            <person name="Lacote R."/>
            <person name="Naiyanetr C."/>
            <person name="Seguin M."/>
            <person name="Romruensukharom P."/>
            <person name="Narangajavana J."/>
        </authorList>
    </citation>
    <scope>INDUCTION</scope>
</reference>
<reference key="9">
    <citation type="journal article" date="2009" name="Planta">
        <title>Histochemical study of detailed laticifer structure and rubber biosynthesis-related protein localization in Hevea brasiliensis using spectral confocal laser scanning microscopy.</title>
        <authorList>
            <person name="Sando T."/>
            <person name="Hayashi T."/>
            <person name="Takeda T."/>
            <person name="Akiyama Y."/>
            <person name="Nakazawa Y."/>
            <person name="Fukusaki E."/>
            <person name="Kobayashi A."/>
        </authorList>
    </citation>
    <scope>TISSUE SPECIFICITY</scope>
</reference>
<reference key="10">
    <citation type="journal article" date="2012" name="J. Exp. Bot.">
        <title>Metabolic routes affecting rubber biosynthesis in Hevea brasiliensis latex.</title>
        <authorList>
            <person name="Chow K.S."/>
            <person name="Mat-Isa M.N."/>
            <person name="Bahari A."/>
            <person name="Ghazali A.K."/>
            <person name="Alias H."/>
            <person name="Mohd-Zainuddin Z."/>
            <person name="Hoh C.C."/>
            <person name="Wan K.L."/>
        </authorList>
    </citation>
    <scope>INDUCTION BY ETHYLENE</scope>
</reference>
<reference key="11">
    <citation type="journal article" date="2014" name="Biochim. Biophys. Acta">
        <title>Rubber particle proteins, HbREF and HbSRPP, show different interactions with model membranes.</title>
        <authorList>
            <person name="Berthelot K."/>
            <person name="Lecomte S."/>
            <person name="Estevez Y."/>
            <person name="Zhendre V."/>
            <person name="Henry S."/>
            <person name="Thevenot J."/>
            <person name="Dufourc E.J."/>
            <person name="Alves I.D."/>
            <person name="Peruch F."/>
        </authorList>
    </citation>
    <scope>SUBCELLULAR LOCATION</scope>
</reference>
<reference key="12">
    <citation type="journal article" date="2014" name="Biochim. Biophys. Acta">
        <title>Homologous Hevea brasiliensis REF (Hevb1) and SRPP (Hevb3) present different auto-assembling.</title>
        <authorList>
            <person name="Berthelot K."/>
            <person name="Lecomte S."/>
            <person name="Estevez Y."/>
            <person name="Coulary-Salin B."/>
            <person name="Peruch F."/>
        </authorList>
    </citation>
    <scope>SUBUNIT</scope>
    <scope>LACK OF GLYCOSYLATION</scope>
</reference>
<reference key="13">
    <citation type="journal article" date="2014" name="Biochimie">
        <title>Hevea brasiliensis REF (Hev b 1) and SRPP (Hev b 3): An overview on rubber particle proteins.</title>
        <authorList>
            <person name="Berthelot K."/>
            <person name="Lecomte S."/>
            <person name="Estevez Y."/>
            <person name="Peruch F."/>
        </authorList>
    </citation>
    <scope>REVIEW</scope>
</reference>
<dbReference type="EMBL" id="AF051317">
    <property type="protein sequence ID" value="AAC82355.1"/>
    <property type="molecule type" value="mRNA"/>
</dbReference>
<dbReference type="EMBL" id="AJ223388">
    <property type="protein sequence ID" value="CAA11303.1"/>
    <property type="molecule type" value="mRNA"/>
</dbReference>
<dbReference type="EMBL" id="AJ223389">
    <property type="protein sequence ID" value="CAA11304.1"/>
    <property type="molecule type" value="mRNA"/>
</dbReference>
<dbReference type="EMBL" id="AJ223390">
    <property type="protein sequence ID" value="CAA11305.1"/>
    <property type="molecule type" value="mRNA"/>
</dbReference>
<dbReference type="PIR" id="T10766">
    <property type="entry name" value="T10766"/>
</dbReference>
<dbReference type="Allergome" id="3314">
    <property type="allergen name" value="Hev b 3.0101"/>
</dbReference>
<dbReference type="Allergome" id="387">
    <property type="allergen name" value="Hev b 3"/>
</dbReference>
<dbReference type="OrthoDB" id="1905464at2759"/>
<dbReference type="GO" id="GO:0005737">
    <property type="term" value="C:cytoplasm"/>
    <property type="evidence" value="ECO:0007669"/>
    <property type="project" value="UniProtKB-SubCell"/>
</dbReference>
<dbReference type="InterPro" id="IPR008802">
    <property type="entry name" value="REF"/>
</dbReference>
<dbReference type="PANTHER" id="PTHR33732">
    <property type="entry name" value="REF/SRPP-LIKE PROTEIN OS05G0151300/LOC_OS05G05940"/>
    <property type="match status" value="1"/>
</dbReference>
<dbReference type="PANTHER" id="PTHR33732:SF9">
    <property type="entry name" value="REF_SRPP-LIKE PROTEIN OS05G0151300_LOC_OS05G05940"/>
    <property type="match status" value="1"/>
</dbReference>
<dbReference type="Pfam" id="PF05755">
    <property type="entry name" value="REF"/>
    <property type="match status" value="1"/>
</dbReference>
<gene>
    <name evidence="10" type="primary">SRPP</name>
    <name evidence="11" type="synonym">HEVB3</name>
</gene>
<comment type="function">
    <text evidence="1">Involved in the biosynthesis of rubber, an isoprenoid polymer (cis-1,4-polyisoprene).</text>
</comment>
<comment type="subunit">
    <text evidence="6">Auto-assembles in solution into stable nanomultimers of a globular nature.</text>
</comment>
<comment type="subcellular location">
    <subcellularLocation>
        <location evidence="5">Cytoplasm</location>
    </subcellularLocation>
    <text evidence="5">Found in latex, the cytoplasm of laticifer cells. Tightly bound to small rubber particles, where it displays a covering effect on the lipid headgroups of the membrane without disturbing its integrity.</text>
</comment>
<comment type="tissue specificity">
    <text evidence="1 3">Highly expressed in the specialized vessel laticifers, but localized only in the laticifer layers in the conducting phloem (PubMed:10358068, PubMed:19415323). Also detected in leaves (PubMed:10358068).</text>
</comment>
<comment type="induction">
    <text evidence="2 4">Induced by tapping (PubMed:12461132). Not induced by wounding, ethephon or abscisic acid treatment (PubMed:12461132). Induced by ethylene (PubMed:22162870).</text>
</comment>
<comment type="PTM">
    <text evidence="6">Not glycosylated.</text>
</comment>
<comment type="PTM">
    <text evidence="7">The N-terminus is blocked.</text>
</comment>
<comment type="PTM">
    <text evidence="13">Consistent shifts of about 266 Da observed by MS in various forms of the intact protein suggest the addition of stearolyl groups.</text>
</comment>
<comment type="mass spectrometry" mass="22258.0" method="Electrospray" evidence="9"/>
<comment type="mass spectrometry" mass="22524.0" method="Electrospray" evidence="9"/>
<comment type="mass spectrometry" mass="22791.0" method="Electrospray" evidence="9"/>
<comment type="mass spectrometry" mass="23058.0" method="Electrospray" evidence="9"/>
<comment type="allergen">
    <text evidence="8">Causes an allergic reaction in human. Involved in latex allergic reactions. Major spina bifida (SB) associated latex allergen. Patients with SB are especially sensitive to specific allergens that do not usually affect adult patients without SB who are otherwise sensitive to latex. These patients are multioperated patients, whose mucosal membranes have been frequently in contact with latex products. Many patients with SB are sensitized to low molecular weight polypeptides derived from the fragmentation of Hev b 3.</text>
</comment>
<comment type="similarity">
    <text evidence="12">Belongs to the REF/SRPP family.</text>
</comment>
<comment type="online information" name="Protein Spotlight">
    <link uri="https://www.proteinspotlight.org/back_issues/013"/>
    <text>Gloves, condoms and bouncy balls - Issue 13 of August 2001</text>
</comment>
<proteinExistence type="evidence at protein level"/>
<organism>
    <name type="scientific">Hevea brasiliensis</name>
    <name type="common">Para rubber tree</name>
    <name type="synonym">Siphonia brasiliensis</name>
    <dbReference type="NCBI Taxonomy" id="3981"/>
    <lineage>
        <taxon>Eukaryota</taxon>
        <taxon>Viridiplantae</taxon>
        <taxon>Streptophyta</taxon>
        <taxon>Embryophyta</taxon>
        <taxon>Tracheophyta</taxon>
        <taxon>Spermatophyta</taxon>
        <taxon>Magnoliopsida</taxon>
        <taxon>eudicotyledons</taxon>
        <taxon>Gunneridae</taxon>
        <taxon>Pentapetalae</taxon>
        <taxon>rosids</taxon>
        <taxon>fabids</taxon>
        <taxon>Malpighiales</taxon>
        <taxon>Euphorbiaceae</taxon>
        <taxon>Crotonoideae</taxon>
        <taxon>Micrandreae</taxon>
        <taxon>Hevea</taxon>
    </lineage>
</organism>
<name>SRPP_HEVBR</name>
<evidence type="ECO:0000269" key="1">
    <source>
    </source>
</evidence>
<evidence type="ECO:0000269" key="2">
    <source>
    </source>
</evidence>
<evidence type="ECO:0000269" key="3">
    <source>
    </source>
</evidence>
<evidence type="ECO:0000269" key="4">
    <source>
    </source>
</evidence>
<evidence type="ECO:0000269" key="5">
    <source>
    </source>
</evidence>
<evidence type="ECO:0000269" key="6">
    <source>
    </source>
</evidence>
<evidence type="ECO:0000269" key="7">
    <source>
    </source>
</evidence>
<evidence type="ECO:0000269" key="8">
    <source>
    </source>
</evidence>
<evidence type="ECO:0000269" key="9">
    <source>
    </source>
</evidence>
<evidence type="ECO:0000303" key="10">
    <source>
    </source>
</evidence>
<evidence type="ECO:0000303" key="11">
    <source>
    </source>
</evidence>
<evidence type="ECO:0000305" key="12"/>
<evidence type="ECO:0000305" key="13">
    <source>
    </source>
</evidence>
<keyword id="KW-0020">Allergen</keyword>
<keyword id="KW-0963">Cytoplasm</keyword>
<keyword id="KW-0903">Direct protein sequencing</keyword>
<protein>
    <recommendedName>
        <fullName evidence="10">Small rubber particle protein</fullName>
        <shortName evidence="10">HbSRPP</shortName>
    </recommendedName>
    <alternativeName>
        <fullName>22 kDa rubber particle protein</fullName>
        <shortName>22 kDa RPP</shortName>
    </alternativeName>
    <alternativeName>
        <fullName>27 kDa natural rubber allergen</fullName>
    </alternativeName>
    <alternativeName>
        <fullName evidence="11">Latex allergen Hev b 3</fullName>
    </alternativeName>
    <allergenName evidence="11">Hev b 3</allergenName>
</protein>
<sequence length="204" mass="22345">MAEEVEEERLKYLDFVRAAGVYAVDSFSTLYLYAKDISGPLKPGVDTIENVVKTVVTPVYYIPLEAVKFVDKTVDVSVTSLDGVVPPVIKQVSAQTYSVAQDAPRIVLDVASSVFNTGVQEGAKALYANLEPKAEQYAVITWRALNKLPLVPQVANVVVPTAVYFSEKYNDVVRGTTEQGYRVSSYLPLLPTEKITKVFGDEAS</sequence>
<accession>O82803</accession>
<accession>Q9S8I3</accession>
<accession>Q9S8I4</accession>
<accession>Q9S8I5</accession>
<accession>Q9S9G7</accession>
<feature type="chain" id="PRO_0000221061" description="Small rubber particle protein">
    <location>
        <begin position="1"/>
        <end position="204"/>
    </location>
</feature>
<feature type="sequence conflict" description="In Ref. 4; AA sequence." evidence="12" ref="4">
    <original>G</original>
    <variation>Y</variation>
    <location>
        <position position="39"/>
    </location>
</feature>
<feature type="sequence conflict" description="In Ref. 4; AA sequence." evidence="12" ref="4">
    <original>G</original>
    <variation>P</variation>
    <location>
        <position position="44"/>
    </location>
</feature>
<feature type="sequence conflict" description="In Ref. 4; AA sequence." evidence="12" ref="4">
    <original>E</original>
    <variation>K</variation>
    <location>
        <position position="49"/>
    </location>
</feature>
<feature type="sequence conflict" description="In Ref. 5; AA sequence." evidence="12" ref="5">
    <original>V</original>
    <variation>P</variation>
    <location>
        <position position="78"/>
    </location>
</feature>
<feature type="sequence conflict" description="In Ref. 5; AA sequence." evidence="12" ref="5">
    <original>V</original>
    <variation>T</variation>
    <location>
        <position position="78"/>
    </location>
</feature>
<feature type="sequence conflict" description="In Ref. 5; AA sequence." evidence="12" ref="5">
    <original>GVQEG</original>
    <variation>RKEKK</variation>
    <location>
        <begin position="118"/>
        <end position="122"/>
    </location>
</feature>
<feature type="sequence conflict" description="In Ref. 3; AA sequence." evidence="12" ref="3">
    <original>T</original>
    <variation>G</variation>
    <location>
        <position position="192"/>
    </location>
</feature>